<organism>
    <name type="scientific">Caldivirga maquilingensis (strain ATCC 700844 / DSM 13496 / JCM 10307 / IC-167)</name>
    <dbReference type="NCBI Taxonomy" id="397948"/>
    <lineage>
        <taxon>Archaea</taxon>
        <taxon>Thermoproteota</taxon>
        <taxon>Thermoprotei</taxon>
        <taxon>Thermoproteales</taxon>
        <taxon>Thermoproteaceae</taxon>
        <taxon>Caldivirga</taxon>
    </lineage>
</organism>
<evidence type="ECO:0000255" key="1">
    <source>
        <dbReference type="HAMAP-Rule" id="MF_00223"/>
    </source>
</evidence>
<protein>
    <recommendedName>
        <fullName evidence="1">GTP cyclohydrolase 1</fullName>
        <ecNumber evidence="1">3.5.4.16</ecNumber>
    </recommendedName>
    <alternativeName>
        <fullName evidence="1">GTP cyclohydrolase I</fullName>
        <shortName evidence="1">GTP-CH-I</shortName>
    </alternativeName>
</protein>
<dbReference type="EC" id="3.5.4.16" evidence="1"/>
<dbReference type="EMBL" id="CP000852">
    <property type="protein sequence ID" value="ABW01366.1"/>
    <property type="molecule type" value="Genomic_DNA"/>
</dbReference>
<dbReference type="RefSeq" id="WP_012185586.1">
    <property type="nucleotide sequence ID" value="NC_009954.1"/>
</dbReference>
<dbReference type="SMR" id="A8MC60"/>
<dbReference type="STRING" id="397948.Cmaq_0521"/>
<dbReference type="GeneID" id="5709170"/>
<dbReference type="KEGG" id="cma:Cmaq_0521"/>
<dbReference type="eggNOG" id="arCOG04542">
    <property type="taxonomic scope" value="Archaea"/>
</dbReference>
<dbReference type="HOGENOM" id="CLU_049768_3_3_2"/>
<dbReference type="OrthoDB" id="8438at2157"/>
<dbReference type="UniPathway" id="UPA00848">
    <property type="reaction ID" value="UER00151"/>
</dbReference>
<dbReference type="Proteomes" id="UP000001137">
    <property type="component" value="Chromosome"/>
</dbReference>
<dbReference type="GO" id="GO:0005737">
    <property type="term" value="C:cytoplasm"/>
    <property type="evidence" value="ECO:0007669"/>
    <property type="project" value="TreeGrafter"/>
</dbReference>
<dbReference type="GO" id="GO:0005525">
    <property type="term" value="F:GTP binding"/>
    <property type="evidence" value="ECO:0007669"/>
    <property type="project" value="UniProtKB-KW"/>
</dbReference>
<dbReference type="GO" id="GO:0003934">
    <property type="term" value="F:GTP cyclohydrolase I activity"/>
    <property type="evidence" value="ECO:0007669"/>
    <property type="project" value="UniProtKB-UniRule"/>
</dbReference>
<dbReference type="GO" id="GO:0008270">
    <property type="term" value="F:zinc ion binding"/>
    <property type="evidence" value="ECO:0007669"/>
    <property type="project" value="UniProtKB-UniRule"/>
</dbReference>
<dbReference type="GO" id="GO:0006730">
    <property type="term" value="P:one-carbon metabolic process"/>
    <property type="evidence" value="ECO:0007669"/>
    <property type="project" value="UniProtKB-UniRule"/>
</dbReference>
<dbReference type="GO" id="GO:0006729">
    <property type="term" value="P:tetrahydrobiopterin biosynthetic process"/>
    <property type="evidence" value="ECO:0007669"/>
    <property type="project" value="TreeGrafter"/>
</dbReference>
<dbReference type="GO" id="GO:0046654">
    <property type="term" value="P:tetrahydrofolate biosynthetic process"/>
    <property type="evidence" value="ECO:0007669"/>
    <property type="project" value="UniProtKB-UniRule"/>
</dbReference>
<dbReference type="FunFam" id="3.30.1130.10:FF:000001">
    <property type="entry name" value="GTP cyclohydrolase 1"/>
    <property type="match status" value="1"/>
</dbReference>
<dbReference type="Gene3D" id="1.10.286.10">
    <property type="match status" value="1"/>
</dbReference>
<dbReference type="Gene3D" id="3.30.1130.10">
    <property type="match status" value="1"/>
</dbReference>
<dbReference type="HAMAP" id="MF_00223">
    <property type="entry name" value="FolE"/>
    <property type="match status" value="1"/>
</dbReference>
<dbReference type="InterPro" id="IPR043133">
    <property type="entry name" value="GTP-CH-I_C/QueF"/>
</dbReference>
<dbReference type="InterPro" id="IPR043134">
    <property type="entry name" value="GTP-CH-I_N"/>
</dbReference>
<dbReference type="InterPro" id="IPR001474">
    <property type="entry name" value="GTP_CycHdrlase_I"/>
</dbReference>
<dbReference type="InterPro" id="IPR020602">
    <property type="entry name" value="GTP_CycHdrlase_I_dom"/>
</dbReference>
<dbReference type="NCBIfam" id="NF006825">
    <property type="entry name" value="PRK09347.1-2"/>
    <property type="match status" value="1"/>
</dbReference>
<dbReference type="NCBIfam" id="NF006826">
    <property type="entry name" value="PRK09347.1-3"/>
    <property type="match status" value="1"/>
</dbReference>
<dbReference type="PANTHER" id="PTHR11109:SF7">
    <property type="entry name" value="GTP CYCLOHYDROLASE 1"/>
    <property type="match status" value="1"/>
</dbReference>
<dbReference type="PANTHER" id="PTHR11109">
    <property type="entry name" value="GTP CYCLOHYDROLASE I"/>
    <property type="match status" value="1"/>
</dbReference>
<dbReference type="Pfam" id="PF01227">
    <property type="entry name" value="GTP_cyclohydroI"/>
    <property type="match status" value="1"/>
</dbReference>
<dbReference type="SUPFAM" id="SSF55620">
    <property type="entry name" value="Tetrahydrobiopterin biosynthesis enzymes-like"/>
    <property type="match status" value="1"/>
</dbReference>
<name>GCH1_CALMQ</name>
<gene>
    <name evidence="1" type="primary">folE</name>
    <name type="ordered locus">Cmaq_0521</name>
</gene>
<feature type="chain" id="PRO_1000100165" description="GTP cyclohydrolase 1">
    <location>
        <begin position="1"/>
        <end position="188"/>
    </location>
</feature>
<feature type="binding site" evidence="1">
    <location>
        <position position="73"/>
    </location>
    <ligand>
        <name>Zn(2+)</name>
        <dbReference type="ChEBI" id="CHEBI:29105"/>
    </ligand>
</feature>
<feature type="binding site" evidence="1">
    <location>
        <position position="76"/>
    </location>
    <ligand>
        <name>Zn(2+)</name>
        <dbReference type="ChEBI" id="CHEBI:29105"/>
    </ligand>
</feature>
<feature type="binding site" evidence="1">
    <location>
        <position position="144"/>
    </location>
    <ligand>
        <name>Zn(2+)</name>
        <dbReference type="ChEBI" id="CHEBI:29105"/>
    </ligand>
</feature>
<reference key="1">
    <citation type="submission" date="2007-10" db="EMBL/GenBank/DDBJ databases">
        <title>Complete sequence of Caldivirga maquilingensis IC-167.</title>
        <authorList>
            <consortium name="US DOE Joint Genome Institute"/>
            <person name="Copeland A."/>
            <person name="Lucas S."/>
            <person name="Lapidus A."/>
            <person name="Barry K."/>
            <person name="Glavina del Rio T."/>
            <person name="Dalin E."/>
            <person name="Tice H."/>
            <person name="Pitluck S."/>
            <person name="Saunders E."/>
            <person name="Brettin T."/>
            <person name="Bruce D."/>
            <person name="Detter J.C."/>
            <person name="Han C."/>
            <person name="Schmutz J."/>
            <person name="Larimer F."/>
            <person name="Land M."/>
            <person name="Hauser L."/>
            <person name="Kyrpides N."/>
            <person name="Ivanova N."/>
            <person name="Biddle J.F."/>
            <person name="Zhang Z."/>
            <person name="Fitz-Gibbon S.T."/>
            <person name="Lowe T.M."/>
            <person name="Saltikov C."/>
            <person name="House C.H."/>
            <person name="Richardson P."/>
        </authorList>
    </citation>
    <scope>NUCLEOTIDE SEQUENCE [LARGE SCALE GENOMIC DNA]</scope>
    <source>
        <strain>ATCC 700844 / DSM 13496 / JCM 10307 / IC-167</strain>
    </source>
</reference>
<accession>A8MC60</accession>
<keyword id="KW-0342">GTP-binding</keyword>
<keyword id="KW-0378">Hydrolase</keyword>
<keyword id="KW-0479">Metal-binding</keyword>
<keyword id="KW-0547">Nucleotide-binding</keyword>
<keyword id="KW-0554">One-carbon metabolism</keyword>
<keyword id="KW-1185">Reference proteome</keyword>
<keyword id="KW-0862">Zinc</keyword>
<sequence>MGVNKALIKQAVKQILVAIGEDPEREGLRRTPDRVANMLEELTNGREENVQYTLFEGSSNMVIVAGIRFSTLCEHHLLPMLGVTHVAYIPSDKVIGVSKIPRIVVKYSRMLQLQERLTRQIMNEVSSATGSGDVMVLTEAYHTCMMIRGVRSASPLVSMAYKGKFNDSSLRLEFLEYIRPFRLNKFLT</sequence>
<proteinExistence type="inferred from homology"/>
<comment type="catalytic activity">
    <reaction evidence="1">
        <text>GTP + H2O = 7,8-dihydroneopterin 3'-triphosphate + formate + H(+)</text>
        <dbReference type="Rhea" id="RHEA:17473"/>
        <dbReference type="ChEBI" id="CHEBI:15377"/>
        <dbReference type="ChEBI" id="CHEBI:15378"/>
        <dbReference type="ChEBI" id="CHEBI:15740"/>
        <dbReference type="ChEBI" id="CHEBI:37565"/>
        <dbReference type="ChEBI" id="CHEBI:58462"/>
        <dbReference type="EC" id="3.5.4.16"/>
    </reaction>
</comment>
<comment type="pathway">
    <text evidence="1">Cofactor biosynthesis; 7,8-dihydroneopterin triphosphate biosynthesis; 7,8-dihydroneopterin triphosphate from GTP: step 1/1.</text>
</comment>
<comment type="subunit">
    <text evidence="1">Homomer.</text>
</comment>
<comment type="similarity">
    <text evidence="1">Belongs to the GTP cyclohydrolase I family.</text>
</comment>